<name>RS21_STRR6</name>
<reference key="1">
    <citation type="journal article" date="2001" name="J. Bacteriol.">
        <title>Genome of the bacterium Streptococcus pneumoniae strain R6.</title>
        <authorList>
            <person name="Hoskins J."/>
            <person name="Alborn W.E. Jr."/>
            <person name="Arnold J."/>
            <person name="Blaszczak L.C."/>
            <person name="Burgett S."/>
            <person name="DeHoff B.S."/>
            <person name="Estrem S.T."/>
            <person name="Fritz L."/>
            <person name="Fu D.-J."/>
            <person name="Fuller W."/>
            <person name="Geringer C."/>
            <person name="Gilmour R."/>
            <person name="Glass J.S."/>
            <person name="Khoja H."/>
            <person name="Kraft A.R."/>
            <person name="Lagace R.E."/>
            <person name="LeBlanc D.J."/>
            <person name="Lee L.N."/>
            <person name="Lefkowitz E.J."/>
            <person name="Lu J."/>
            <person name="Matsushima P."/>
            <person name="McAhren S.M."/>
            <person name="McHenney M."/>
            <person name="McLeaster K."/>
            <person name="Mundy C.W."/>
            <person name="Nicas T.I."/>
            <person name="Norris F.H."/>
            <person name="O'Gara M."/>
            <person name="Peery R.B."/>
            <person name="Robertson G.T."/>
            <person name="Rockey P."/>
            <person name="Sun P.-M."/>
            <person name="Winkler M.E."/>
            <person name="Yang Y."/>
            <person name="Young-Bellido M."/>
            <person name="Zhao G."/>
            <person name="Zook C.A."/>
            <person name="Baltz R.H."/>
            <person name="Jaskunas S.R."/>
            <person name="Rosteck P.R. Jr."/>
            <person name="Skatrud P.L."/>
            <person name="Glass J.I."/>
        </authorList>
    </citation>
    <scope>NUCLEOTIDE SEQUENCE [LARGE SCALE GENOMIC DNA]</scope>
    <source>
        <strain>ATCC BAA-255 / R6</strain>
    </source>
</reference>
<accession>P66525</accession>
<accession>Q97Q17</accession>
<organism>
    <name type="scientific">Streptococcus pneumoniae (strain ATCC BAA-255 / R6)</name>
    <dbReference type="NCBI Taxonomy" id="171101"/>
    <lineage>
        <taxon>Bacteria</taxon>
        <taxon>Bacillati</taxon>
        <taxon>Bacillota</taxon>
        <taxon>Bacilli</taxon>
        <taxon>Lactobacillales</taxon>
        <taxon>Streptococcaceae</taxon>
        <taxon>Streptococcus</taxon>
    </lineage>
</organism>
<feature type="chain" id="PRO_0000178382" description="Small ribosomal subunit protein bS21">
    <location>
        <begin position="1"/>
        <end position="58"/>
    </location>
</feature>
<feature type="region of interest" description="Disordered" evidence="2">
    <location>
        <begin position="39"/>
        <end position="58"/>
    </location>
</feature>
<feature type="compositionally biased region" description="Basic residues" evidence="2">
    <location>
        <begin position="43"/>
        <end position="58"/>
    </location>
</feature>
<proteinExistence type="inferred from homology"/>
<gene>
    <name evidence="1" type="primary">rpsU</name>
    <name type="ordered locus">spr1271</name>
</gene>
<keyword id="KW-1185">Reference proteome</keyword>
<keyword id="KW-0687">Ribonucleoprotein</keyword>
<keyword id="KW-0689">Ribosomal protein</keyword>
<comment type="similarity">
    <text evidence="1">Belongs to the bacterial ribosomal protein bS21 family.</text>
</comment>
<comment type="sequence caution" evidence="3">
    <conflict type="erroneous initiation">
        <sequence resource="EMBL-CDS" id="AAL00075"/>
    </conflict>
</comment>
<dbReference type="EMBL" id="AE007317">
    <property type="protein sequence ID" value="AAL00075.1"/>
    <property type="status" value="ALT_INIT"/>
    <property type="molecule type" value="Genomic_DNA"/>
</dbReference>
<dbReference type="PIR" id="F98030">
    <property type="entry name" value="F98030"/>
</dbReference>
<dbReference type="RefSeq" id="NP_358864.1">
    <property type="nucleotide sequence ID" value="NC_003098.1"/>
</dbReference>
<dbReference type="RefSeq" id="WP_000048055.1">
    <property type="nucleotide sequence ID" value="NC_003098.1"/>
</dbReference>
<dbReference type="SMR" id="P66525"/>
<dbReference type="STRING" id="171101.spr1271"/>
<dbReference type="GeneID" id="45653328"/>
<dbReference type="KEGG" id="spr:spr1271"/>
<dbReference type="PATRIC" id="fig|171101.6.peg.1378"/>
<dbReference type="eggNOG" id="COG0828">
    <property type="taxonomic scope" value="Bacteria"/>
</dbReference>
<dbReference type="HOGENOM" id="CLU_159258_3_2_9"/>
<dbReference type="PRO" id="PR:P66525"/>
<dbReference type="Proteomes" id="UP000000586">
    <property type="component" value="Chromosome"/>
</dbReference>
<dbReference type="GO" id="GO:1990904">
    <property type="term" value="C:ribonucleoprotein complex"/>
    <property type="evidence" value="ECO:0007669"/>
    <property type="project" value="UniProtKB-KW"/>
</dbReference>
<dbReference type="GO" id="GO:0005840">
    <property type="term" value="C:ribosome"/>
    <property type="evidence" value="ECO:0007669"/>
    <property type="project" value="UniProtKB-KW"/>
</dbReference>
<dbReference type="GO" id="GO:0003735">
    <property type="term" value="F:structural constituent of ribosome"/>
    <property type="evidence" value="ECO:0007669"/>
    <property type="project" value="InterPro"/>
</dbReference>
<dbReference type="GO" id="GO:0006412">
    <property type="term" value="P:translation"/>
    <property type="evidence" value="ECO:0007669"/>
    <property type="project" value="UniProtKB-UniRule"/>
</dbReference>
<dbReference type="Gene3D" id="1.20.5.1150">
    <property type="entry name" value="Ribosomal protein S8"/>
    <property type="match status" value="1"/>
</dbReference>
<dbReference type="HAMAP" id="MF_00358">
    <property type="entry name" value="Ribosomal_bS21"/>
    <property type="match status" value="1"/>
</dbReference>
<dbReference type="InterPro" id="IPR001911">
    <property type="entry name" value="Ribosomal_bS21"/>
</dbReference>
<dbReference type="InterPro" id="IPR018278">
    <property type="entry name" value="Ribosomal_bS21_CS"/>
</dbReference>
<dbReference type="InterPro" id="IPR038380">
    <property type="entry name" value="Ribosomal_bS21_sf"/>
</dbReference>
<dbReference type="NCBIfam" id="TIGR00030">
    <property type="entry name" value="S21p"/>
    <property type="match status" value="1"/>
</dbReference>
<dbReference type="PANTHER" id="PTHR21109">
    <property type="entry name" value="MITOCHONDRIAL 28S RIBOSOMAL PROTEIN S21"/>
    <property type="match status" value="1"/>
</dbReference>
<dbReference type="PANTHER" id="PTHR21109:SF22">
    <property type="entry name" value="SMALL RIBOSOMAL SUBUNIT PROTEIN BS21"/>
    <property type="match status" value="1"/>
</dbReference>
<dbReference type="Pfam" id="PF01165">
    <property type="entry name" value="Ribosomal_S21"/>
    <property type="match status" value="1"/>
</dbReference>
<dbReference type="PRINTS" id="PR00976">
    <property type="entry name" value="RIBOSOMALS21"/>
</dbReference>
<dbReference type="PROSITE" id="PS01181">
    <property type="entry name" value="RIBOSOMAL_S21"/>
    <property type="match status" value="1"/>
</dbReference>
<evidence type="ECO:0000255" key="1">
    <source>
        <dbReference type="HAMAP-Rule" id="MF_00358"/>
    </source>
</evidence>
<evidence type="ECO:0000256" key="2">
    <source>
        <dbReference type="SAM" id="MobiDB-lite"/>
    </source>
</evidence>
<evidence type="ECO:0000305" key="3"/>
<protein>
    <recommendedName>
        <fullName evidence="1">Small ribosomal subunit protein bS21</fullName>
    </recommendedName>
    <alternativeName>
        <fullName evidence="3">30S ribosomal protein S21</fullName>
    </alternativeName>
</protein>
<sequence length="58" mass="6998">MSKTVVRKNESLDDALRRFKRAVTKAGTLQETRKREFYEKPSVKRKRKSEVARKRKKF</sequence>